<dbReference type="EMBL" id="J02952">
    <property type="protein sequence ID" value="AAA49282.1"/>
    <property type="molecule type" value="mRNA"/>
</dbReference>
<dbReference type="EMBL" id="J02953">
    <property type="protein sequence ID" value="AAA49283.1"/>
    <property type="molecule type" value="mRNA"/>
</dbReference>
<dbReference type="PIR" id="A28009">
    <property type="entry name" value="A28009"/>
</dbReference>
<dbReference type="SMR" id="P09108"/>
<dbReference type="MINT" id="P09108"/>
<dbReference type="iPTMnet" id="P09108"/>
<dbReference type="GO" id="GO:0005737">
    <property type="term" value="C:cytoplasm"/>
    <property type="evidence" value="ECO:0007669"/>
    <property type="project" value="UniProtKB-KW"/>
</dbReference>
<dbReference type="GO" id="GO:0005856">
    <property type="term" value="C:cytoskeleton"/>
    <property type="evidence" value="ECO:0007669"/>
    <property type="project" value="UniProtKB-SubCell"/>
</dbReference>
<dbReference type="GO" id="GO:0031594">
    <property type="term" value="C:neuromuscular junction"/>
    <property type="evidence" value="ECO:0007669"/>
    <property type="project" value="TreeGrafter"/>
</dbReference>
<dbReference type="GO" id="GO:0045211">
    <property type="term" value="C:postsynaptic membrane"/>
    <property type="evidence" value="ECO:0007669"/>
    <property type="project" value="UniProtKB-SubCell"/>
</dbReference>
<dbReference type="GO" id="GO:0033130">
    <property type="term" value="F:acetylcholine receptor binding"/>
    <property type="evidence" value="ECO:0007669"/>
    <property type="project" value="InterPro"/>
</dbReference>
<dbReference type="GO" id="GO:0043495">
    <property type="term" value="F:protein-membrane adaptor activity"/>
    <property type="evidence" value="ECO:0007669"/>
    <property type="project" value="InterPro"/>
</dbReference>
<dbReference type="GO" id="GO:0008270">
    <property type="term" value="F:zinc ion binding"/>
    <property type="evidence" value="ECO:0007669"/>
    <property type="project" value="UniProtKB-KW"/>
</dbReference>
<dbReference type="GO" id="GO:1900075">
    <property type="term" value="P:positive regulation of neuromuscular synaptic transmission"/>
    <property type="evidence" value="ECO:0007669"/>
    <property type="project" value="TreeGrafter"/>
</dbReference>
<dbReference type="GO" id="GO:0007271">
    <property type="term" value="P:synaptic transmission, cholinergic"/>
    <property type="evidence" value="ECO:0007669"/>
    <property type="project" value="TreeGrafter"/>
</dbReference>
<dbReference type="CDD" id="cd16478">
    <property type="entry name" value="RING-H2_Rapsyn"/>
    <property type="match status" value="1"/>
</dbReference>
<dbReference type="FunFam" id="1.25.40.10:FF:000206">
    <property type="entry name" value="43 kDa receptor-associated protein of the synapse"/>
    <property type="match status" value="1"/>
</dbReference>
<dbReference type="Gene3D" id="1.25.40.10">
    <property type="entry name" value="Tetratricopeptide repeat domain"/>
    <property type="match status" value="2"/>
</dbReference>
<dbReference type="Gene3D" id="3.30.40.10">
    <property type="entry name" value="Zinc/RING finger domain, C3HC4 (zinc finger)"/>
    <property type="match status" value="1"/>
</dbReference>
<dbReference type="InterPro" id="IPR001237">
    <property type="entry name" value="Postsynaptic"/>
</dbReference>
<dbReference type="InterPro" id="IPR018293">
    <property type="entry name" value="Postsynaptic_CS"/>
</dbReference>
<dbReference type="InterPro" id="IPR052480">
    <property type="entry name" value="RAPsyn"/>
</dbReference>
<dbReference type="InterPro" id="IPR019568">
    <property type="entry name" value="Rapsyn_myristoylation/link_N"/>
</dbReference>
<dbReference type="InterPro" id="IPR011990">
    <property type="entry name" value="TPR-like_helical_dom_sf"/>
</dbReference>
<dbReference type="InterPro" id="IPR019734">
    <property type="entry name" value="TPR_rpt"/>
</dbReference>
<dbReference type="InterPro" id="IPR001841">
    <property type="entry name" value="Znf_RING"/>
</dbReference>
<dbReference type="InterPro" id="IPR013083">
    <property type="entry name" value="Znf_RING/FYVE/PHD"/>
</dbReference>
<dbReference type="PANTHER" id="PTHR46574">
    <property type="entry name" value="43 KDA RECEPTOR-ASSOCIATED PROTEIN OF THE SYNAPSE"/>
    <property type="match status" value="1"/>
</dbReference>
<dbReference type="PANTHER" id="PTHR46574:SF1">
    <property type="entry name" value="43 KDA RECEPTOR-ASSOCIATED PROTEIN OF THE SYNAPSE"/>
    <property type="match status" value="1"/>
</dbReference>
<dbReference type="Pfam" id="PF10579">
    <property type="entry name" value="Rapsyn_N"/>
    <property type="match status" value="1"/>
</dbReference>
<dbReference type="Pfam" id="PF13424">
    <property type="entry name" value="TPR_12"/>
    <property type="match status" value="1"/>
</dbReference>
<dbReference type="Pfam" id="PF13639">
    <property type="entry name" value="zf-RING_2"/>
    <property type="match status" value="1"/>
</dbReference>
<dbReference type="PRINTS" id="PR00217">
    <property type="entry name" value="POSTSYNAPTIC"/>
</dbReference>
<dbReference type="SMART" id="SM00184">
    <property type="entry name" value="RING"/>
    <property type="match status" value="1"/>
</dbReference>
<dbReference type="SMART" id="SM00028">
    <property type="entry name" value="TPR"/>
    <property type="match status" value="7"/>
</dbReference>
<dbReference type="SUPFAM" id="SSF57850">
    <property type="entry name" value="RING/U-box"/>
    <property type="match status" value="1"/>
</dbReference>
<dbReference type="SUPFAM" id="SSF48452">
    <property type="entry name" value="TPR-like"/>
    <property type="match status" value="2"/>
</dbReference>
<dbReference type="PROSITE" id="PS00405">
    <property type="entry name" value="43_KD_POSTSYNAPTIC"/>
    <property type="match status" value="1"/>
</dbReference>
<dbReference type="PROSITE" id="PS50005">
    <property type="entry name" value="TPR"/>
    <property type="match status" value="4"/>
</dbReference>
<dbReference type="PROSITE" id="PS50293">
    <property type="entry name" value="TPR_REGION"/>
    <property type="match status" value="1"/>
</dbReference>
<dbReference type="PROSITE" id="PS50089">
    <property type="entry name" value="ZF_RING_2"/>
    <property type="match status" value="1"/>
</dbReference>
<proteinExistence type="evidence at protein level"/>
<evidence type="ECO:0000250" key="1"/>
<evidence type="ECO:0000255" key="2"/>
<evidence type="ECO:0000255" key="3">
    <source>
        <dbReference type="PROSITE-ProRule" id="PRU00175"/>
    </source>
</evidence>
<evidence type="ECO:0000269" key="4">
    <source>
    </source>
</evidence>
<evidence type="ECO:0000303" key="5">
    <source>
    </source>
</evidence>
<evidence type="ECO:0000305" key="6"/>
<sequence>MGQDQTKQQIEKGLQLYQANETGKALEIWQQVVERSTELPGRFRALGCLITAHSEMGKYEDMLRFAVAQSEAARQMGDPERVTEAYLNLARGHEKLCEFSEAVAYCRTCLGAEGGPLRLQFNGQVCLSMGNAFLGLSAFQKALECFEKALRYAHGNDDKMLECRVCCSLGAFYVQLKDYEKALFFPCKSAELVADYGRGWSLKYKAMSRYHMAAAYRKLGRMDDAMECCEESMKIALQHQDRPLQALCLLCFADIHRHRSDIGKALPRYESSLNIMTEIGNRLGQAHVLLNIAKCWMTEKKLDKTLGVVQKAEELADAVGNKLVLLKAHCLYETIYREMGSDQLLRDHVVKFHECMEDMELYCGLCGESIGDQNSQLQALPCSHLFHLKCLQTNGNRGCPNCKRSSVKPGYV</sequence>
<gene>
    <name type="primary">RAPSN</name>
</gene>
<name>RAPSN_TETCF</name>
<protein>
    <recommendedName>
        <fullName>43 kDa receptor-associated protein of the synapse</fullName>
        <shortName>RAPsyn</shortName>
    </recommendedName>
    <alternativeName>
        <fullName>43 kDa postsynaptic protein</fullName>
    </alternativeName>
    <alternativeName>
        <fullName>Acetylcholine receptor-associated 43 kDa protein</fullName>
    </alternativeName>
</protein>
<organism>
    <name type="scientific">Tetronarce californica</name>
    <name type="common">Pacific electric ray</name>
    <name type="synonym">Torpedo californica</name>
    <dbReference type="NCBI Taxonomy" id="7787"/>
    <lineage>
        <taxon>Eukaryota</taxon>
        <taxon>Metazoa</taxon>
        <taxon>Chordata</taxon>
        <taxon>Craniata</taxon>
        <taxon>Vertebrata</taxon>
        <taxon>Chondrichthyes</taxon>
        <taxon>Elasmobranchii</taxon>
        <taxon>Batoidea</taxon>
        <taxon>Torpediniformes</taxon>
        <taxon>Torpedinidae</taxon>
        <taxon>Tetronarce</taxon>
    </lineage>
</organism>
<keyword id="KW-0025">Alternative splicing</keyword>
<keyword id="KW-1003">Cell membrane</keyword>
<keyword id="KW-0963">Cytoplasm</keyword>
<keyword id="KW-0206">Cytoskeleton</keyword>
<keyword id="KW-0903">Direct protein sequencing</keyword>
<keyword id="KW-0449">Lipoprotein</keyword>
<keyword id="KW-0472">Membrane</keyword>
<keyword id="KW-0479">Metal-binding</keyword>
<keyword id="KW-0519">Myristate</keyword>
<keyword id="KW-0597">Phosphoprotein</keyword>
<keyword id="KW-0628">Postsynaptic cell membrane</keyword>
<keyword id="KW-0677">Repeat</keyword>
<keyword id="KW-0770">Synapse</keyword>
<keyword id="KW-0802">TPR repeat</keyword>
<keyword id="KW-0862">Zinc</keyword>
<keyword id="KW-0863">Zinc-finger</keyword>
<reference key="1">
    <citation type="journal article" date="1987" name="Proc. Natl. Acad. Sci. U.S.A.">
        <title>cDNAs for the postsynaptic 43-kDa protein of Torpedo electric organ encode two proteins with different carboxyl termini.</title>
        <authorList>
            <person name="Frail D.E."/>
            <person name="Mudd J."/>
            <person name="Shah V."/>
            <person name="Carr C."/>
            <person name="Cohen J.B."/>
            <person name="Merlie J.P."/>
        </authorList>
    </citation>
    <scope>NUCLEOTIDE SEQUENCE [MRNA] (ISOFORMS LONG AND SHORT)</scope>
</reference>
<reference key="2">
    <citation type="journal article" date="1988" name="Development">
        <title>Regulation of transcript encoding the 43K subsynaptic protein during development and after denervation.</title>
        <authorList>
            <person name="Baldwin T.J."/>
            <person name="Theriot J.A."/>
            <person name="Yoshihara C.M."/>
            <person name="Burden S.J."/>
        </authorList>
    </citation>
    <scope>NUCLEOTIDE SEQUENCE [MRNA]</scope>
</reference>
<reference key="3">
    <citation type="journal article" date="1987" name="Biochemistry">
        <title>The 43-kilodalton protein of Torpedo nicotinic postsynaptic membranes: purification and determination of primary structure.</title>
        <authorList>
            <person name="Carr C."/>
            <person name="McCourt D."/>
            <person name="Cohen J.B."/>
        </authorList>
    </citation>
    <scope>PROTEIN SEQUENCE OF 8-412</scope>
</reference>
<reference key="4">
    <citation type="journal article" date="1988" name="J. Cell Biol.">
        <title>Acetylcholine receptor-associated 43K protein contains covalently bound myristate.</title>
        <authorList>
            <person name="Musil L.S."/>
            <person name="Carr C."/>
            <person name="Cohen J.B."/>
            <person name="Merlie J.P."/>
        </authorList>
    </citation>
    <scope>MYRISTOYLATION AT GLY-2</scope>
</reference>
<accession>P09108</accession>
<feature type="initiator methionine" description="Removed">
    <location>
        <position position="1"/>
    </location>
</feature>
<feature type="chain" id="PRO_0000167594" description="43 kDa receptor-associated protein of the synapse">
    <location>
        <begin position="2"/>
        <end position="412"/>
    </location>
</feature>
<feature type="repeat" description="TPR 1">
    <location>
        <begin position="6"/>
        <end position="39"/>
    </location>
</feature>
<feature type="repeat" description="TPR 2">
    <location>
        <begin position="83"/>
        <end position="116"/>
    </location>
</feature>
<feature type="repeat" description="TPR 3">
    <location>
        <begin position="123"/>
        <end position="156"/>
    </location>
</feature>
<feature type="repeat" description="TPR 4">
    <location>
        <begin position="163"/>
        <end position="196"/>
    </location>
</feature>
<feature type="repeat" description="TPR 5">
    <location>
        <begin position="206"/>
        <end position="239"/>
    </location>
</feature>
<feature type="repeat" description="TPR 6">
    <location>
        <begin position="246"/>
        <end position="279"/>
    </location>
</feature>
<feature type="repeat" description="TPR 7">
    <location>
        <begin position="286"/>
        <end position="319"/>
    </location>
</feature>
<feature type="zinc finger region" description="RING-type" evidence="3">
    <location>
        <begin position="363"/>
        <end position="403"/>
    </location>
</feature>
<feature type="modified residue" description="Phosphotyrosine" evidence="2">
    <location>
        <position position="196"/>
    </location>
</feature>
<feature type="modified residue" description="Phosphoserine" evidence="2">
    <location>
        <position position="405"/>
    </location>
</feature>
<feature type="lipid moiety-binding region" description="N-myristoyl glycine" evidence="4">
    <location>
        <position position="2"/>
    </location>
</feature>
<feature type="splice variant" id="VSP_005534" description="In isoform Short." evidence="5">
    <location>
        <begin position="390"/>
        <end position="412"/>
    </location>
</feature>
<feature type="sequence conflict" description="In Ref. 3; AA sequence." evidence="6" ref="3">
    <original>Y</original>
    <variation>T</variation>
    <location>
        <position position="362"/>
    </location>
</feature>
<feature type="sequence conflict" description="In Ref. 3; AA sequence." evidence="6" ref="3">
    <original>N</original>
    <variation>D</variation>
    <location>
        <position position="394"/>
    </location>
</feature>
<feature type="sequence conflict" description="In Ref. 3; AA sequence." evidence="6" ref="3">
    <original>Y</original>
    <variation>T</variation>
    <location>
        <position position="411"/>
    </location>
</feature>
<comment type="function">
    <text evidence="1">Postsynaptic protein required for clustering of nicotinic acetylcholine receptors (nAChRs) at the neuromuscular junction. It may link the receptor to the underlying postsynaptic cytoskeleton, possibly by direct association with actin or spectrin (By similarity).</text>
</comment>
<comment type="subcellular location">
    <subcellularLocation>
        <location>Cell membrane</location>
        <topology>Peripheral membrane protein</topology>
        <orientation>Cytoplasmic side</orientation>
    </subcellularLocation>
    <subcellularLocation>
        <location>Postsynaptic cell membrane</location>
        <topology>Peripheral membrane protein</topology>
        <orientation>Cytoplasmic side</orientation>
    </subcellularLocation>
    <subcellularLocation>
        <location>Cytoplasm</location>
        <location>Cytoskeleton</location>
    </subcellularLocation>
    <text>Cytoplasmic surface of postsynaptic membranes.</text>
</comment>
<comment type="alternative products">
    <event type="alternative splicing"/>
    <isoform>
        <id>P09108-1</id>
        <name>Long</name>
        <sequence type="displayed"/>
    </isoform>
    <isoform>
        <id>P09108-2</id>
        <name>Short</name>
        <sequence type="described" ref="VSP_005534"/>
    </isoform>
</comment>
<comment type="domain">
    <text>A cysteine-rich region homologous to part of the regulatory domain of protein kinase C may be important in interactions of this protein with the lipid bilayer.</text>
</comment>
<comment type="similarity">
    <text evidence="6">Belongs to the RAPsyn family.</text>
</comment>